<organism>
    <name type="scientific">Escherichia coli (strain K12)</name>
    <dbReference type="NCBI Taxonomy" id="83333"/>
    <lineage>
        <taxon>Bacteria</taxon>
        <taxon>Pseudomonadati</taxon>
        <taxon>Pseudomonadota</taxon>
        <taxon>Gammaproteobacteria</taxon>
        <taxon>Enterobacterales</taxon>
        <taxon>Enterobacteriaceae</taxon>
        <taxon>Escherichia</taxon>
    </lineage>
</organism>
<dbReference type="EMBL" id="D13328">
    <property type="protein sequence ID" value="BAA02589.1"/>
    <property type="molecule type" value="Genomic_DNA"/>
</dbReference>
<dbReference type="EMBL" id="U18997">
    <property type="protein sequence ID" value="AAA57898.1"/>
    <property type="status" value="ALT_INIT"/>
    <property type="molecule type" value="Genomic_DNA"/>
</dbReference>
<dbReference type="EMBL" id="U00096">
    <property type="protein sequence ID" value="AAC76129.2"/>
    <property type="molecule type" value="Genomic_DNA"/>
</dbReference>
<dbReference type="EMBL" id="AP009048">
    <property type="protein sequence ID" value="BAE77144.1"/>
    <property type="molecule type" value="Genomic_DNA"/>
</dbReference>
<dbReference type="PIR" id="C65098">
    <property type="entry name" value="C65098"/>
</dbReference>
<dbReference type="RefSeq" id="NP_417565.2">
    <property type="nucleotide sequence ID" value="NC_000913.3"/>
</dbReference>
<dbReference type="RefSeq" id="WP_000406488.1">
    <property type="nucleotide sequence ID" value="NZ_STEB01000001.1"/>
</dbReference>
<dbReference type="SMR" id="P0ACL2"/>
<dbReference type="BioGRID" id="4262410">
    <property type="interactions" value="134"/>
</dbReference>
<dbReference type="FunCoup" id="P0ACL2">
    <property type="interactions" value="30"/>
</dbReference>
<dbReference type="IntAct" id="P0ACL2">
    <property type="interactions" value="3"/>
</dbReference>
<dbReference type="STRING" id="511145.b3094"/>
<dbReference type="jPOST" id="P0ACL2"/>
<dbReference type="PaxDb" id="511145-b3094"/>
<dbReference type="EnsemblBacteria" id="AAC76129">
    <property type="protein sequence ID" value="AAC76129"/>
    <property type="gene ID" value="b3094"/>
</dbReference>
<dbReference type="GeneID" id="93778889"/>
<dbReference type="GeneID" id="947602"/>
<dbReference type="KEGG" id="ecj:JW3065"/>
<dbReference type="KEGG" id="eco:b3094"/>
<dbReference type="KEGG" id="ecoc:C3026_16895"/>
<dbReference type="PATRIC" id="fig|511145.12.peg.3189"/>
<dbReference type="EchoBASE" id="EB2595"/>
<dbReference type="eggNOG" id="COG2186">
    <property type="taxonomic scope" value="Bacteria"/>
</dbReference>
<dbReference type="HOGENOM" id="CLU_017584_9_5_6"/>
<dbReference type="InParanoid" id="P0ACL2"/>
<dbReference type="OMA" id="EDPTFGD"/>
<dbReference type="OrthoDB" id="5450856at2"/>
<dbReference type="PhylomeDB" id="P0ACL2"/>
<dbReference type="BioCyc" id="EcoCyc:PD03270"/>
<dbReference type="PRO" id="PR:P0ACL2"/>
<dbReference type="Proteomes" id="UP000000625">
    <property type="component" value="Chromosome"/>
</dbReference>
<dbReference type="GO" id="GO:0003677">
    <property type="term" value="F:DNA binding"/>
    <property type="evidence" value="ECO:0007669"/>
    <property type="project" value="UniProtKB-KW"/>
</dbReference>
<dbReference type="GO" id="GO:0003700">
    <property type="term" value="F:DNA-binding transcription factor activity"/>
    <property type="evidence" value="ECO:0007669"/>
    <property type="project" value="InterPro"/>
</dbReference>
<dbReference type="GO" id="GO:0045892">
    <property type="term" value="P:negative regulation of DNA-templated transcription"/>
    <property type="evidence" value="ECO:0000315"/>
    <property type="project" value="EcoCyc"/>
</dbReference>
<dbReference type="CDD" id="cd07377">
    <property type="entry name" value="WHTH_GntR"/>
    <property type="match status" value="1"/>
</dbReference>
<dbReference type="FunFam" id="1.10.10.10:FF:000252">
    <property type="entry name" value="Exu regulon transcriptional regulator"/>
    <property type="match status" value="1"/>
</dbReference>
<dbReference type="FunFam" id="1.20.120.530:FF:000002">
    <property type="entry name" value="GntR family transcriptional regulator"/>
    <property type="match status" value="1"/>
</dbReference>
<dbReference type="Gene3D" id="1.20.120.530">
    <property type="entry name" value="GntR ligand-binding domain-like"/>
    <property type="match status" value="1"/>
</dbReference>
<dbReference type="Gene3D" id="1.10.10.10">
    <property type="entry name" value="Winged helix-like DNA-binding domain superfamily/Winged helix DNA-binding domain"/>
    <property type="match status" value="1"/>
</dbReference>
<dbReference type="InterPro" id="IPR011711">
    <property type="entry name" value="GntR_C"/>
</dbReference>
<dbReference type="InterPro" id="IPR008920">
    <property type="entry name" value="TF_FadR/GntR_C"/>
</dbReference>
<dbReference type="InterPro" id="IPR000524">
    <property type="entry name" value="Tscrpt_reg_HTH_GntR"/>
</dbReference>
<dbReference type="InterPro" id="IPR036388">
    <property type="entry name" value="WH-like_DNA-bd_sf"/>
</dbReference>
<dbReference type="InterPro" id="IPR036390">
    <property type="entry name" value="WH_DNA-bd_sf"/>
</dbReference>
<dbReference type="NCBIfam" id="NF008571">
    <property type="entry name" value="PRK11523.1"/>
    <property type="match status" value="1"/>
</dbReference>
<dbReference type="PANTHER" id="PTHR43537:SF7">
    <property type="entry name" value="EXU REGULON TRANSCRIPTIONAL REGULATOR"/>
    <property type="match status" value="1"/>
</dbReference>
<dbReference type="PANTHER" id="PTHR43537">
    <property type="entry name" value="TRANSCRIPTIONAL REGULATOR, GNTR FAMILY"/>
    <property type="match status" value="1"/>
</dbReference>
<dbReference type="Pfam" id="PF07729">
    <property type="entry name" value="FCD"/>
    <property type="match status" value="1"/>
</dbReference>
<dbReference type="Pfam" id="PF00392">
    <property type="entry name" value="GntR"/>
    <property type="match status" value="1"/>
</dbReference>
<dbReference type="PRINTS" id="PR00035">
    <property type="entry name" value="HTHGNTR"/>
</dbReference>
<dbReference type="SMART" id="SM00895">
    <property type="entry name" value="FCD"/>
    <property type="match status" value="1"/>
</dbReference>
<dbReference type="SMART" id="SM00345">
    <property type="entry name" value="HTH_GNTR"/>
    <property type="match status" value="1"/>
</dbReference>
<dbReference type="SUPFAM" id="SSF48008">
    <property type="entry name" value="GntR ligand-binding domain-like"/>
    <property type="match status" value="1"/>
</dbReference>
<dbReference type="SUPFAM" id="SSF46785">
    <property type="entry name" value="Winged helix' DNA-binding domain"/>
    <property type="match status" value="1"/>
</dbReference>
<dbReference type="PROSITE" id="PS50949">
    <property type="entry name" value="HTH_GNTR"/>
    <property type="match status" value="1"/>
</dbReference>
<accession>P0ACL2</accession>
<accession>P42608</accession>
<accession>P76665</accession>
<accession>Q2M9B2</accession>
<accession>Q8X4Y9</accession>
<reference key="1">
    <citation type="submission" date="1992-09" db="EMBL/GenBank/DDBJ databases">
        <authorList>
            <person name="Mizobuchi K."/>
        </authorList>
    </citation>
    <scope>NUCLEOTIDE SEQUENCE [GENOMIC DNA]</scope>
    <source>
        <strain>K12 / W3110 / ATCC 27325 / DSM 5911</strain>
    </source>
</reference>
<reference key="2">
    <citation type="journal article" date="1997" name="Science">
        <title>The complete genome sequence of Escherichia coli K-12.</title>
        <authorList>
            <person name="Blattner F.R."/>
            <person name="Plunkett G. III"/>
            <person name="Bloch C.A."/>
            <person name="Perna N.T."/>
            <person name="Burland V."/>
            <person name="Riley M."/>
            <person name="Collado-Vides J."/>
            <person name="Glasner J.D."/>
            <person name="Rode C.K."/>
            <person name="Mayhew G.F."/>
            <person name="Gregor J."/>
            <person name="Davis N.W."/>
            <person name="Kirkpatrick H.A."/>
            <person name="Goeden M.A."/>
            <person name="Rose D.J."/>
            <person name="Mau B."/>
            <person name="Shao Y."/>
        </authorList>
    </citation>
    <scope>NUCLEOTIDE SEQUENCE [LARGE SCALE GENOMIC DNA]</scope>
    <source>
        <strain>K12 / MG1655 / ATCC 47076</strain>
    </source>
</reference>
<reference key="3">
    <citation type="journal article" date="2006" name="Mol. Syst. Biol.">
        <title>Highly accurate genome sequences of Escherichia coli K-12 strains MG1655 and W3110.</title>
        <authorList>
            <person name="Hayashi K."/>
            <person name="Morooka N."/>
            <person name="Yamamoto Y."/>
            <person name="Fujita K."/>
            <person name="Isono K."/>
            <person name="Choi S."/>
            <person name="Ohtsubo E."/>
            <person name="Baba T."/>
            <person name="Wanner B.L."/>
            <person name="Mori H."/>
            <person name="Horiuchi T."/>
        </authorList>
    </citation>
    <scope>NUCLEOTIDE SEQUENCE [LARGE SCALE GENOMIC DNA]</scope>
    <source>
        <strain>K12 / W3110 / ATCC 27325 / DSM 5911</strain>
    </source>
</reference>
<gene>
    <name type="primary">exuR</name>
    <name type="ordered locus">b3094</name>
    <name type="ordered locus">JW3065</name>
</gene>
<protein>
    <recommendedName>
        <fullName>Exu regulon transcriptional regulator</fullName>
    </recommendedName>
</protein>
<proteinExistence type="predicted"/>
<sequence>MEITEPRRLYQQLAADLKERIEQGVYLVGDKLPAERFIADEKNVSRTVVREAIIMLEVEGYVEVRKGSGIHVVSNQPRHQQAADNNMEFANYGPFELLQARQLIESNIAEFAATQVTKQDIMKLMAIQEQARGEQCFRDSEWDLQFHIQVALATQNSALAAIVEKMWTQRSHNPYWKKLHEHIDSRTVDNWCDDHDQILKALIRKDPHAAKLAMWQHLENTKIMLFNETSDDFEFNADRYLFAENPVVHLDTATSGSK</sequence>
<evidence type="ECO:0000255" key="1">
    <source>
        <dbReference type="PROSITE-ProRule" id="PRU00307"/>
    </source>
</evidence>
<evidence type="ECO:0000305" key="2"/>
<name>EXUR_ECOLI</name>
<comment type="function">
    <text>Repressor for the exu regulon that encode genes involved in hexuronate utilization. It regulates the ExuT, UxaCA and UxuRAB operons. Binds D-tagaturonate and D-fructuronate as inducers.</text>
</comment>
<comment type="sequence caution" evidence="2">
    <conflict type="erroneous initiation">
        <sequence resource="EMBL-CDS" id="AAA57898"/>
    </conflict>
    <text>Extended N-terminus.</text>
</comment>
<feature type="chain" id="PRO_0000050622" description="Exu regulon transcriptional regulator">
    <location>
        <begin position="1"/>
        <end position="258"/>
    </location>
</feature>
<feature type="domain" description="HTH gntR-type" evidence="1">
    <location>
        <begin position="7"/>
        <end position="75"/>
    </location>
</feature>
<feature type="DNA-binding region" description="H-T-H motif" evidence="1">
    <location>
        <begin position="35"/>
        <end position="54"/>
    </location>
</feature>
<keyword id="KW-0238">DNA-binding</keyword>
<keyword id="KW-1185">Reference proteome</keyword>
<keyword id="KW-0678">Repressor</keyword>
<keyword id="KW-0804">Transcription</keyword>
<keyword id="KW-0805">Transcription regulation</keyword>